<sequence length="91" mass="10237">MARVTVQDAVEKIGNRFDLVLVAARRARQMQVGGKDPLVPEENDKTTVIALREIEEGLINNQILDVRERQEQQEQEAAELQAVTAIAEGRR</sequence>
<evidence type="ECO:0000255" key="1">
    <source>
        <dbReference type="HAMAP-Rule" id="MF_00366"/>
    </source>
</evidence>
<proteinExistence type="inferred from homology"/>
<protein>
    <recommendedName>
        <fullName evidence="1">DNA-directed RNA polymerase subunit omega</fullName>
        <shortName evidence="1">RNAP omega subunit</shortName>
        <ecNumber evidence="1">2.7.7.6</ecNumber>
    </recommendedName>
    <alternativeName>
        <fullName evidence="1">RNA polymerase omega subunit</fullName>
    </alternativeName>
    <alternativeName>
        <fullName evidence="1">Transcriptase subunit omega</fullName>
    </alternativeName>
</protein>
<reference key="1">
    <citation type="journal article" date="2006" name="Mol. Microbiol.">
        <title>Role of pathogenicity island-associated integrases in the genome plasticity of uropathogenic Escherichia coli strain 536.</title>
        <authorList>
            <person name="Hochhut B."/>
            <person name="Wilde C."/>
            <person name="Balling G."/>
            <person name="Middendorf B."/>
            <person name="Dobrindt U."/>
            <person name="Brzuszkiewicz E."/>
            <person name="Gottschalk G."/>
            <person name="Carniel E."/>
            <person name="Hacker J."/>
        </authorList>
    </citation>
    <scope>NUCLEOTIDE SEQUENCE [LARGE SCALE GENOMIC DNA]</scope>
    <source>
        <strain>536 / UPEC</strain>
    </source>
</reference>
<accession>Q0TBG0</accession>
<comment type="function">
    <text evidence="1">Promotes RNA polymerase assembly. Latches the N- and C-terminal regions of the beta' subunit thereby facilitating its interaction with the beta and alpha subunits.</text>
</comment>
<comment type="catalytic activity">
    <reaction evidence="1">
        <text>RNA(n) + a ribonucleoside 5'-triphosphate = RNA(n+1) + diphosphate</text>
        <dbReference type="Rhea" id="RHEA:21248"/>
        <dbReference type="Rhea" id="RHEA-COMP:14527"/>
        <dbReference type="Rhea" id="RHEA-COMP:17342"/>
        <dbReference type="ChEBI" id="CHEBI:33019"/>
        <dbReference type="ChEBI" id="CHEBI:61557"/>
        <dbReference type="ChEBI" id="CHEBI:140395"/>
        <dbReference type="EC" id="2.7.7.6"/>
    </reaction>
</comment>
<comment type="subunit">
    <text evidence="1">The RNAP catalytic core consists of 2 alpha, 1 beta, 1 beta' and 1 omega subunit. When a sigma factor is associated with the core the holoenzyme is formed, which can initiate transcription.</text>
</comment>
<comment type="similarity">
    <text evidence="1">Belongs to the RNA polymerase subunit omega family.</text>
</comment>
<feature type="chain" id="PRO_1000005923" description="DNA-directed RNA polymerase subunit omega">
    <location>
        <begin position="1"/>
        <end position="91"/>
    </location>
</feature>
<dbReference type="EC" id="2.7.7.6" evidence="1"/>
<dbReference type="EMBL" id="CP000247">
    <property type="protein sequence ID" value="ABG71719.1"/>
    <property type="molecule type" value="Genomic_DNA"/>
</dbReference>
<dbReference type="RefSeq" id="WP_000135058.1">
    <property type="nucleotide sequence ID" value="NC_008253.1"/>
</dbReference>
<dbReference type="SMR" id="Q0TBG0"/>
<dbReference type="GeneID" id="98390719"/>
<dbReference type="KEGG" id="ecp:ECP_3747"/>
<dbReference type="HOGENOM" id="CLU_125406_5_3_6"/>
<dbReference type="Proteomes" id="UP000009182">
    <property type="component" value="Chromosome"/>
</dbReference>
<dbReference type="GO" id="GO:0000428">
    <property type="term" value="C:DNA-directed RNA polymerase complex"/>
    <property type="evidence" value="ECO:0007669"/>
    <property type="project" value="UniProtKB-KW"/>
</dbReference>
<dbReference type="GO" id="GO:0003677">
    <property type="term" value="F:DNA binding"/>
    <property type="evidence" value="ECO:0007669"/>
    <property type="project" value="UniProtKB-UniRule"/>
</dbReference>
<dbReference type="GO" id="GO:0003899">
    <property type="term" value="F:DNA-directed RNA polymerase activity"/>
    <property type="evidence" value="ECO:0007669"/>
    <property type="project" value="UniProtKB-UniRule"/>
</dbReference>
<dbReference type="GO" id="GO:0006351">
    <property type="term" value="P:DNA-templated transcription"/>
    <property type="evidence" value="ECO:0007669"/>
    <property type="project" value="UniProtKB-UniRule"/>
</dbReference>
<dbReference type="FunFam" id="3.90.940.10:FF:000001">
    <property type="entry name" value="DNA-directed RNA polymerase subunit omega"/>
    <property type="match status" value="1"/>
</dbReference>
<dbReference type="Gene3D" id="3.90.940.10">
    <property type="match status" value="1"/>
</dbReference>
<dbReference type="HAMAP" id="MF_00366">
    <property type="entry name" value="RNApol_bact_RpoZ"/>
    <property type="match status" value="1"/>
</dbReference>
<dbReference type="InterPro" id="IPR003716">
    <property type="entry name" value="DNA-dir_RNA_pol_omega"/>
</dbReference>
<dbReference type="InterPro" id="IPR006110">
    <property type="entry name" value="Pol_omega/Rpo6/RPB6"/>
</dbReference>
<dbReference type="InterPro" id="IPR036161">
    <property type="entry name" value="RPB6/omega-like_sf"/>
</dbReference>
<dbReference type="NCBIfam" id="TIGR00690">
    <property type="entry name" value="rpoZ"/>
    <property type="match status" value="1"/>
</dbReference>
<dbReference type="PANTHER" id="PTHR34476">
    <property type="entry name" value="DNA-DIRECTED RNA POLYMERASE SUBUNIT OMEGA"/>
    <property type="match status" value="1"/>
</dbReference>
<dbReference type="PANTHER" id="PTHR34476:SF1">
    <property type="entry name" value="DNA-DIRECTED RNA POLYMERASE SUBUNIT OMEGA"/>
    <property type="match status" value="1"/>
</dbReference>
<dbReference type="Pfam" id="PF01192">
    <property type="entry name" value="RNA_pol_Rpb6"/>
    <property type="match status" value="1"/>
</dbReference>
<dbReference type="SMART" id="SM01409">
    <property type="entry name" value="RNA_pol_Rpb6"/>
    <property type="match status" value="1"/>
</dbReference>
<dbReference type="SUPFAM" id="SSF63562">
    <property type="entry name" value="RPB6/omega subunit-like"/>
    <property type="match status" value="1"/>
</dbReference>
<gene>
    <name evidence="1" type="primary">rpoZ</name>
    <name type="ordered locus">ECP_3747</name>
</gene>
<name>RPOZ_ECOL5</name>
<organism>
    <name type="scientific">Escherichia coli O6:K15:H31 (strain 536 / UPEC)</name>
    <dbReference type="NCBI Taxonomy" id="362663"/>
    <lineage>
        <taxon>Bacteria</taxon>
        <taxon>Pseudomonadati</taxon>
        <taxon>Pseudomonadota</taxon>
        <taxon>Gammaproteobacteria</taxon>
        <taxon>Enterobacterales</taxon>
        <taxon>Enterobacteriaceae</taxon>
        <taxon>Escherichia</taxon>
    </lineage>
</organism>
<keyword id="KW-0240">DNA-directed RNA polymerase</keyword>
<keyword id="KW-0548">Nucleotidyltransferase</keyword>
<keyword id="KW-0804">Transcription</keyword>
<keyword id="KW-0808">Transferase</keyword>